<accession>A9WKF8</accession>
<organism>
    <name type="scientific">Chloroflexus aurantiacus (strain ATCC 29366 / DSM 635 / J-10-fl)</name>
    <dbReference type="NCBI Taxonomy" id="324602"/>
    <lineage>
        <taxon>Bacteria</taxon>
        <taxon>Bacillati</taxon>
        <taxon>Chloroflexota</taxon>
        <taxon>Chloroflexia</taxon>
        <taxon>Chloroflexales</taxon>
        <taxon>Chloroflexineae</taxon>
        <taxon>Chloroflexaceae</taxon>
        <taxon>Chloroflexus</taxon>
    </lineage>
</organism>
<name>LIPB_CHLAA</name>
<keyword id="KW-0012">Acyltransferase</keyword>
<keyword id="KW-0963">Cytoplasm</keyword>
<keyword id="KW-1185">Reference proteome</keyword>
<keyword id="KW-0808">Transferase</keyword>
<reference key="1">
    <citation type="journal article" date="2011" name="BMC Genomics">
        <title>Complete genome sequence of the filamentous anoxygenic phototrophic bacterium Chloroflexus aurantiacus.</title>
        <authorList>
            <person name="Tang K.H."/>
            <person name="Barry K."/>
            <person name="Chertkov O."/>
            <person name="Dalin E."/>
            <person name="Han C.S."/>
            <person name="Hauser L.J."/>
            <person name="Honchak B.M."/>
            <person name="Karbach L.E."/>
            <person name="Land M.L."/>
            <person name="Lapidus A."/>
            <person name="Larimer F.W."/>
            <person name="Mikhailova N."/>
            <person name="Pitluck S."/>
            <person name="Pierson B.K."/>
            <person name="Blankenship R.E."/>
        </authorList>
    </citation>
    <scope>NUCLEOTIDE SEQUENCE [LARGE SCALE GENOMIC DNA]</scope>
    <source>
        <strain>ATCC 29366 / DSM 635 / J-10-fl</strain>
    </source>
</reference>
<protein>
    <recommendedName>
        <fullName evidence="1">Octanoyltransferase</fullName>
        <ecNumber evidence="1">2.3.1.181</ecNumber>
    </recommendedName>
    <alternativeName>
        <fullName evidence="1">Lipoate-protein ligase B</fullName>
    </alternativeName>
    <alternativeName>
        <fullName evidence="1">Lipoyl/octanoyl transferase</fullName>
    </alternativeName>
    <alternativeName>
        <fullName evidence="1">Octanoyl-[acyl-carrier-protein]-protein N-octanoyltransferase</fullName>
    </alternativeName>
</protein>
<evidence type="ECO:0000255" key="1">
    <source>
        <dbReference type="HAMAP-Rule" id="MF_00013"/>
    </source>
</evidence>
<evidence type="ECO:0000255" key="2">
    <source>
        <dbReference type="PROSITE-ProRule" id="PRU01067"/>
    </source>
</evidence>
<proteinExistence type="inferred from homology"/>
<comment type="function">
    <text evidence="1">Catalyzes the transfer of endogenously produced octanoic acid from octanoyl-acyl-carrier-protein onto the lipoyl domains of lipoate-dependent enzymes. Lipoyl-ACP can also act as a substrate although octanoyl-ACP is likely to be the physiological substrate.</text>
</comment>
<comment type="catalytic activity">
    <reaction evidence="1">
        <text>octanoyl-[ACP] + L-lysyl-[protein] = N(6)-octanoyl-L-lysyl-[protein] + holo-[ACP] + H(+)</text>
        <dbReference type="Rhea" id="RHEA:17665"/>
        <dbReference type="Rhea" id="RHEA-COMP:9636"/>
        <dbReference type="Rhea" id="RHEA-COMP:9685"/>
        <dbReference type="Rhea" id="RHEA-COMP:9752"/>
        <dbReference type="Rhea" id="RHEA-COMP:9928"/>
        <dbReference type="ChEBI" id="CHEBI:15378"/>
        <dbReference type="ChEBI" id="CHEBI:29969"/>
        <dbReference type="ChEBI" id="CHEBI:64479"/>
        <dbReference type="ChEBI" id="CHEBI:78463"/>
        <dbReference type="ChEBI" id="CHEBI:78809"/>
        <dbReference type="EC" id="2.3.1.181"/>
    </reaction>
</comment>
<comment type="pathway">
    <text evidence="1">Protein modification; protein lipoylation via endogenous pathway; protein N(6)-(lipoyl)lysine from octanoyl-[acyl-carrier-protein]: step 1/2.</text>
</comment>
<comment type="subcellular location">
    <subcellularLocation>
        <location evidence="1">Cytoplasm</location>
    </subcellularLocation>
</comment>
<comment type="miscellaneous">
    <text evidence="1">In the reaction, the free carboxyl group of octanoic acid is attached via an amide linkage to the epsilon-amino group of a specific lysine residue of lipoyl domains of lipoate-dependent enzymes.</text>
</comment>
<comment type="similarity">
    <text evidence="1">Belongs to the LipB family.</text>
</comment>
<dbReference type="EC" id="2.3.1.181" evidence="1"/>
<dbReference type="EMBL" id="CP000909">
    <property type="protein sequence ID" value="ABY36036.1"/>
    <property type="molecule type" value="Genomic_DNA"/>
</dbReference>
<dbReference type="RefSeq" id="WP_012258689.1">
    <property type="nucleotide sequence ID" value="NC_010175.1"/>
</dbReference>
<dbReference type="RefSeq" id="YP_001636425.1">
    <property type="nucleotide sequence ID" value="NC_010175.1"/>
</dbReference>
<dbReference type="SMR" id="A9WKF8"/>
<dbReference type="STRING" id="324602.Caur_2835"/>
<dbReference type="EnsemblBacteria" id="ABY36036">
    <property type="protein sequence ID" value="ABY36036"/>
    <property type="gene ID" value="Caur_2835"/>
</dbReference>
<dbReference type="KEGG" id="cau:Caur_2835"/>
<dbReference type="PATRIC" id="fig|324602.8.peg.3191"/>
<dbReference type="eggNOG" id="COG0321">
    <property type="taxonomic scope" value="Bacteria"/>
</dbReference>
<dbReference type="HOGENOM" id="CLU_035168_1_3_0"/>
<dbReference type="InParanoid" id="A9WKF8"/>
<dbReference type="UniPathway" id="UPA00538">
    <property type="reaction ID" value="UER00592"/>
</dbReference>
<dbReference type="Proteomes" id="UP000002008">
    <property type="component" value="Chromosome"/>
</dbReference>
<dbReference type="GO" id="GO:0005737">
    <property type="term" value="C:cytoplasm"/>
    <property type="evidence" value="ECO:0007669"/>
    <property type="project" value="UniProtKB-SubCell"/>
</dbReference>
<dbReference type="GO" id="GO:0033819">
    <property type="term" value="F:lipoyl(octanoyl) transferase activity"/>
    <property type="evidence" value="ECO:0000318"/>
    <property type="project" value="GO_Central"/>
</dbReference>
<dbReference type="GO" id="GO:0036211">
    <property type="term" value="P:protein modification process"/>
    <property type="evidence" value="ECO:0007669"/>
    <property type="project" value="InterPro"/>
</dbReference>
<dbReference type="CDD" id="cd16444">
    <property type="entry name" value="LipB"/>
    <property type="match status" value="1"/>
</dbReference>
<dbReference type="FunFam" id="3.30.930.10:FF:000189">
    <property type="entry name" value="Octanoyltransferase"/>
    <property type="match status" value="1"/>
</dbReference>
<dbReference type="Gene3D" id="3.30.930.10">
    <property type="entry name" value="Bira Bifunctional Protein, Domain 2"/>
    <property type="match status" value="1"/>
</dbReference>
<dbReference type="HAMAP" id="MF_00013">
    <property type="entry name" value="LipB"/>
    <property type="match status" value="1"/>
</dbReference>
<dbReference type="InterPro" id="IPR045864">
    <property type="entry name" value="aa-tRNA-synth_II/BPL/LPL"/>
</dbReference>
<dbReference type="InterPro" id="IPR004143">
    <property type="entry name" value="BPL_LPL_catalytic"/>
</dbReference>
<dbReference type="InterPro" id="IPR000544">
    <property type="entry name" value="Octanoyltransferase"/>
</dbReference>
<dbReference type="InterPro" id="IPR020605">
    <property type="entry name" value="Octanoyltransferase_CS"/>
</dbReference>
<dbReference type="NCBIfam" id="TIGR00214">
    <property type="entry name" value="lipB"/>
    <property type="match status" value="1"/>
</dbReference>
<dbReference type="NCBIfam" id="NF010925">
    <property type="entry name" value="PRK14345.1"/>
    <property type="match status" value="1"/>
</dbReference>
<dbReference type="PANTHER" id="PTHR10993:SF7">
    <property type="entry name" value="LIPOYLTRANSFERASE 2, MITOCHONDRIAL-RELATED"/>
    <property type="match status" value="1"/>
</dbReference>
<dbReference type="PANTHER" id="PTHR10993">
    <property type="entry name" value="OCTANOYLTRANSFERASE"/>
    <property type="match status" value="1"/>
</dbReference>
<dbReference type="Pfam" id="PF21948">
    <property type="entry name" value="LplA-B_cat"/>
    <property type="match status" value="1"/>
</dbReference>
<dbReference type="PIRSF" id="PIRSF016262">
    <property type="entry name" value="LPLase"/>
    <property type="match status" value="1"/>
</dbReference>
<dbReference type="SUPFAM" id="SSF55681">
    <property type="entry name" value="Class II aaRS and biotin synthetases"/>
    <property type="match status" value="1"/>
</dbReference>
<dbReference type="PROSITE" id="PS51733">
    <property type="entry name" value="BPL_LPL_CATALYTIC"/>
    <property type="match status" value="1"/>
</dbReference>
<dbReference type="PROSITE" id="PS01313">
    <property type="entry name" value="LIPB"/>
    <property type="match status" value="1"/>
</dbReference>
<sequence>MRTLTVHYLGQIAYTAAWDIQRQLAAERSRGQIGDTLLLLEHPPTITLGNKARPDHVLASPAELAARGVAVVQSDRGGEVTYHAPGQLVAYPIFKLSQHGSDVGRYVRGLEESVIRVLAGYGLVGERVAGLTGVWVRNGAAKICAIGVKLSASGVTTHGLALNVDPDLSGFDLIVPCGITDRSVTSLAFELGQAPALAEVAERLIAQIGEVFALEPRVEALAM</sequence>
<gene>
    <name evidence="1" type="primary">lipB</name>
    <name type="ordered locus">Caur_2835</name>
</gene>
<feature type="chain" id="PRO_1000073996" description="Octanoyltransferase">
    <location>
        <begin position="1"/>
        <end position="223"/>
    </location>
</feature>
<feature type="domain" description="BPL/LPL catalytic" evidence="2">
    <location>
        <begin position="31"/>
        <end position="216"/>
    </location>
</feature>
<feature type="active site" description="Acyl-thioester intermediate" evidence="1">
    <location>
        <position position="177"/>
    </location>
</feature>
<feature type="binding site" evidence="1">
    <location>
        <begin position="76"/>
        <end position="83"/>
    </location>
    <ligand>
        <name>substrate</name>
    </ligand>
</feature>
<feature type="binding site" evidence="1">
    <location>
        <begin position="145"/>
        <end position="147"/>
    </location>
    <ligand>
        <name>substrate</name>
    </ligand>
</feature>
<feature type="binding site" evidence="1">
    <location>
        <begin position="159"/>
        <end position="161"/>
    </location>
    <ligand>
        <name>substrate</name>
    </ligand>
</feature>
<feature type="site" description="Lowers pKa of active site Cys" evidence="1">
    <location>
        <position position="142"/>
    </location>
</feature>